<accession>B2U8D3</accession>
<evidence type="ECO:0000255" key="1">
    <source>
        <dbReference type="HAMAP-Rule" id="MF_00366"/>
    </source>
</evidence>
<dbReference type="EC" id="2.7.7.6" evidence="1"/>
<dbReference type="EMBL" id="CP001068">
    <property type="protein sequence ID" value="ACD27409.1"/>
    <property type="molecule type" value="Genomic_DNA"/>
</dbReference>
<dbReference type="SMR" id="B2U8D3"/>
<dbReference type="STRING" id="402626.Rpic_2275"/>
<dbReference type="KEGG" id="rpi:Rpic_2275"/>
<dbReference type="eggNOG" id="COG1758">
    <property type="taxonomic scope" value="Bacteria"/>
</dbReference>
<dbReference type="HOGENOM" id="CLU_125406_5_1_4"/>
<dbReference type="GO" id="GO:0000428">
    <property type="term" value="C:DNA-directed RNA polymerase complex"/>
    <property type="evidence" value="ECO:0007669"/>
    <property type="project" value="UniProtKB-KW"/>
</dbReference>
<dbReference type="GO" id="GO:0003677">
    <property type="term" value="F:DNA binding"/>
    <property type="evidence" value="ECO:0007669"/>
    <property type="project" value="UniProtKB-UniRule"/>
</dbReference>
<dbReference type="GO" id="GO:0003899">
    <property type="term" value="F:DNA-directed RNA polymerase activity"/>
    <property type="evidence" value="ECO:0007669"/>
    <property type="project" value="UniProtKB-UniRule"/>
</dbReference>
<dbReference type="GO" id="GO:0006351">
    <property type="term" value="P:DNA-templated transcription"/>
    <property type="evidence" value="ECO:0007669"/>
    <property type="project" value="UniProtKB-UniRule"/>
</dbReference>
<dbReference type="Gene3D" id="3.90.940.10">
    <property type="match status" value="1"/>
</dbReference>
<dbReference type="HAMAP" id="MF_00366">
    <property type="entry name" value="RNApol_bact_RpoZ"/>
    <property type="match status" value="1"/>
</dbReference>
<dbReference type="InterPro" id="IPR003716">
    <property type="entry name" value="DNA-dir_RNA_pol_omega"/>
</dbReference>
<dbReference type="InterPro" id="IPR006110">
    <property type="entry name" value="Pol_omega/Rpo6/RPB6"/>
</dbReference>
<dbReference type="InterPro" id="IPR036161">
    <property type="entry name" value="RPB6/omega-like_sf"/>
</dbReference>
<dbReference type="NCBIfam" id="TIGR00690">
    <property type="entry name" value="rpoZ"/>
    <property type="match status" value="1"/>
</dbReference>
<dbReference type="PANTHER" id="PTHR34476">
    <property type="entry name" value="DNA-DIRECTED RNA POLYMERASE SUBUNIT OMEGA"/>
    <property type="match status" value="1"/>
</dbReference>
<dbReference type="PANTHER" id="PTHR34476:SF1">
    <property type="entry name" value="DNA-DIRECTED RNA POLYMERASE SUBUNIT OMEGA"/>
    <property type="match status" value="1"/>
</dbReference>
<dbReference type="Pfam" id="PF01192">
    <property type="entry name" value="RNA_pol_Rpb6"/>
    <property type="match status" value="1"/>
</dbReference>
<dbReference type="SMART" id="SM01409">
    <property type="entry name" value="RNA_pol_Rpb6"/>
    <property type="match status" value="1"/>
</dbReference>
<dbReference type="SUPFAM" id="SSF63562">
    <property type="entry name" value="RPB6/omega subunit-like"/>
    <property type="match status" value="1"/>
</dbReference>
<protein>
    <recommendedName>
        <fullName evidence="1">DNA-directed RNA polymerase subunit omega</fullName>
        <shortName evidence="1">RNAP omega subunit</shortName>
        <ecNumber evidence="1">2.7.7.6</ecNumber>
    </recommendedName>
    <alternativeName>
        <fullName evidence="1">RNA polymerase omega subunit</fullName>
    </alternativeName>
    <alternativeName>
        <fullName evidence="1">Transcriptase subunit omega</fullName>
    </alternativeName>
</protein>
<organism>
    <name type="scientific">Ralstonia pickettii (strain 12J)</name>
    <dbReference type="NCBI Taxonomy" id="402626"/>
    <lineage>
        <taxon>Bacteria</taxon>
        <taxon>Pseudomonadati</taxon>
        <taxon>Pseudomonadota</taxon>
        <taxon>Betaproteobacteria</taxon>
        <taxon>Burkholderiales</taxon>
        <taxon>Burkholderiaceae</taxon>
        <taxon>Ralstonia</taxon>
    </lineage>
</organism>
<sequence length="67" mass="7404">MARITVEDCLKQIPNRFELALAATYRARQLVQGHTPKVDAKDKPTVTALREIASGQVGIEMLKKVPS</sequence>
<proteinExistence type="inferred from homology"/>
<reference key="1">
    <citation type="submission" date="2008-05" db="EMBL/GenBank/DDBJ databases">
        <title>Complete sequence of chromosome 1 of Ralstonia pickettii 12J.</title>
        <authorList>
            <person name="Lucas S."/>
            <person name="Copeland A."/>
            <person name="Lapidus A."/>
            <person name="Glavina del Rio T."/>
            <person name="Dalin E."/>
            <person name="Tice H."/>
            <person name="Bruce D."/>
            <person name="Goodwin L."/>
            <person name="Pitluck S."/>
            <person name="Meincke L."/>
            <person name="Brettin T."/>
            <person name="Detter J.C."/>
            <person name="Han C."/>
            <person name="Kuske C.R."/>
            <person name="Schmutz J."/>
            <person name="Larimer F."/>
            <person name="Land M."/>
            <person name="Hauser L."/>
            <person name="Kyrpides N."/>
            <person name="Mikhailova N."/>
            <person name="Marsh T."/>
            <person name="Richardson P."/>
        </authorList>
    </citation>
    <scope>NUCLEOTIDE SEQUENCE [LARGE SCALE GENOMIC DNA]</scope>
    <source>
        <strain>12J</strain>
    </source>
</reference>
<gene>
    <name evidence="1" type="primary">rpoZ</name>
    <name type="ordered locus">Rpic_2275</name>
</gene>
<feature type="chain" id="PRO_1000121259" description="DNA-directed RNA polymerase subunit omega">
    <location>
        <begin position="1"/>
        <end position="67"/>
    </location>
</feature>
<name>RPOZ_RALPJ</name>
<comment type="function">
    <text evidence="1">Promotes RNA polymerase assembly. Latches the N- and C-terminal regions of the beta' subunit thereby facilitating its interaction with the beta and alpha subunits.</text>
</comment>
<comment type="catalytic activity">
    <reaction evidence="1">
        <text>RNA(n) + a ribonucleoside 5'-triphosphate = RNA(n+1) + diphosphate</text>
        <dbReference type="Rhea" id="RHEA:21248"/>
        <dbReference type="Rhea" id="RHEA-COMP:14527"/>
        <dbReference type="Rhea" id="RHEA-COMP:17342"/>
        <dbReference type="ChEBI" id="CHEBI:33019"/>
        <dbReference type="ChEBI" id="CHEBI:61557"/>
        <dbReference type="ChEBI" id="CHEBI:140395"/>
        <dbReference type="EC" id="2.7.7.6"/>
    </reaction>
</comment>
<comment type="subunit">
    <text evidence="1">The RNAP catalytic core consists of 2 alpha, 1 beta, 1 beta' and 1 omega subunit. When a sigma factor is associated with the core the holoenzyme is formed, which can initiate transcription.</text>
</comment>
<comment type="similarity">
    <text evidence="1">Belongs to the RNA polymerase subunit omega family.</text>
</comment>
<keyword id="KW-0240">DNA-directed RNA polymerase</keyword>
<keyword id="KW-0548">Nucleotidyltransferase</keyword>
<keyword id="KW-0804">Transcription</keyword>
<keyword id="KW-0808">Transferase</keyword>